<proteinExistence type="inferred from homology"/>
<feature type="chain" id="PRO_1000085739" description="N-acetylneuraminate lyase">
    <location>
        <begin position="1"/>
        <end position="297"/>
    </location>
</feature>
<feature type="active site" description="Proton donor" evidence="1">
    <location>
        <position position="137"/>
    </location>
</feature>
<feature type="active site" description="Schiff-base intermediate with substrate" evidence="1">
    <location>
        <position position="165"/>
    </location>
</feature>
<feature type="binding site" evidence="1">
    <location>
        <position position="47"/>
    </location>
    <ligand>
        <name>aceneuramate</name>
        <dbReference type="ChEBI" id="CHEBI:173083"/>
    </ligand>
</feature>
<feature type="binding site" evidence="1">
    <location>
        <position position="48"/>
    </location>
    <ligand>
        <name>aceneuramate</name>
        <dbReference type="ChEBI" id="CHEBI:173083"/>
    </ligand>
</feature>
<feature type="binding site" evidence="1">
    <location>
        <position position="167"/>
    </location>
    <ligand>
        <name>aceneuramate</name>
        <dbReference type="ChEBI" id="CHEBI:173083"/>
    </ligand>
</feature>
<feature type="binding site" evidence="1">
    <location>
        <position position="189"/>
    </location>
    <ligand>
        <name>aceneuramate</name>
        <dbReference type="ChEBI" id="CHEBI:173083"/>
    </ligand>
</feature>
<feature type="binding site" evidence="1">
    <location>
        <position position="191"/>
    </location>
    <ligand>
        <name>aceneuramate</name>
        <dbReference type="ChEBI" id="CHEBI:173083"/>
    </ligand>
</feature>
<feature type="binding site" evidence="1">
    <location>
        <position position="192"/>
    </location>
    <ligand>
        <name>aceneuramate</name>
        <dbReference type="ChEBI" id="CHEBI:173083"/>
    </ligand>
</feature>
<feature type="binding site" evidence="1">
    <location>
        <position position="208"/>
    </location>
    <ligand>
        <name>aceneuramate</name>
        <dbReference type="ChEBI" id="CHEBI:173083"/>
    </ligand>
</feature>
<dbReference type="EC" id="4.1.3.3" evidence="1"/>
<dbReference type="EMBL" id="CP000886">
    <property type="protein sequence ID" value="ABX69486.1"/>
    <property type="molecule type" value="Genomic_DNA"/>
</dbReference>
<dbReference type="RefSeq" id="WP_001029665.1">
    <property type="nucleotide sequence ID" value="NC_010102.1"/>
</dbReference>
<dbReference type="SMR" id="A9N833"/>
<dbReference type="KEGG" id="spq:SPAB_04163"/>
<dbReference type="PATRIC" id="fig|1016998.12.peg.3920"/>
<dbReference type="HOGENOM" id="CLU_049343_6_0_6"/>
<dbReference type="BioCyc" id="SENT1016998:SPAB_RS16925-MONOMER"/>
<dbReference type="UniPathway" id="UPA00629">
    <property type="reaction ID" value="UER00680"/>
</dbReference>
<dbReference type="Proteomes" id="UP000008556">
    <property type="component" value="Chromosome"/>
</dbReference>
<dbReference type="GO" id="GO:0005829">
    <property type="term" value="C:cytosol"/>
    <property type="evidence" value="ECO:0007669"/>
    <property type="project" value="TreeGrafter"/>
</dbReference>
<dbReference type="GO" id="GO:0008747">
    <property type="term" value="F:N-acetylneuraminate lyase activity"/>
    <property type="evidence" value="ECO:0007669"/>
    <property type="project" value="UniProtKB-UniRule"/>
</dbReference>
<dbReference type="GO" id="GO:0005975">
    <property type="term" value="P:carbohydrate metabolic process"/>
    <property type="evidence" value="ECO:0007669"/>
    <property type="project" value="UniProtKB-UniRule"/>
</dbReference>
<dbReference type="GO" id="GO:0019262">
    <property type="term" value="P:N-acetylneuraminate catabolic process"/>
    <property type="evidence" value="ECO:0007669"/>
    <property type="project" value="UniProtKB-UniRule"/>
</dbReference>
<dbReference type="CDD" id="cd00954">
    <property type="entry name" value="NAL"/>
    <property type="match status" value="1"/>
</dbReference>
<dbReference type="FunFam" id="3.20.20.70:FF:000039">
    <property type="entry name" value="N-acetylneuraminate lyase"/>
    <property type="match status" value="1"/>
</dbReference>
<dbReference type="Gene3D" id="3.20.20.70">
    <property type="entry name" value="Aldolase class I"/>
    <property type="match status" value="1"/>
</dbReference>
<dbReference type="HAMAP" id="MF_01237">
    <property type="entry name" value="N_acetylneuram_lyase"/>
    <property type="match status" value="1"/>
</dbReference>
<dbReference type="InterPro" id="IPR013785">
    <property type="entry name" value="Aldolase_TIM"/>
</dbReference>
<dbReference type="InterPro" id="IPR002220">
    <property type="entry name" value="DapA-like"/>
</dbReference>
<dbReference type="InterPro" id="IPR005264">
    <property type="entry name" value="NanA"/>
</dbReference>
<dbReference type="InterPro" id="IPR020625">
    <property type="entry name" value="Schiff_base-form_aldolases_AS"/>
</dbReference>
<dbReference type="InterPro" id="IPR020624">
    <property type="entry name" value="Schiff_base-form_aldolases_CS"/>
</dbReference>
<dbReference type="NCBIfam" id="TIGR00683">
    <property type="entry name" value="nanA"/>
    <property type="match status" value="1"/>
</dbReference>
<dbReference type="NCBIfam" id="NF003164">
    <property type="entry name" value="PRK04147.1"/>
    <property type="match status" value="1"/>
</dbReference>
<dbReference type="PANTHER" id="PTHR42849">
    <property type="entry name" value="N-ACETYLNEURAMINATE LYASE"/>
    <property type="match status" value="1"/>
</dbReference>
<dbReference type="PANTHER" id="PTHR42849:SF1">
    <property type="entry name" value="N-ACETYLNEURAMINATE LYASE"/>
    <property type="match status" value="1"/>
</dbReference>
<dbReference type="Pfam" id="PF00701">
    <property type="entry name" value="DHDPS"/>
    <property type="match status" value="1"/>
</dbReference>
<dbReference type="PIRSF" id="PIRSF001365">
    <property type="entry name" value="DHDPS"/>
    <property type="match status" value="1"/>
</dbReference>
<dbReference type="PRINTS" id="PR00146">
    <property type="entry name" value="DHPICSNTHASE"/>
</dbReference>
<dbReference type="SMART" id="SM01130">
    <property type="entry name" value="DHDPS"/>
    <property type="match status" value="1"/>
</dbReference>
<dbReference type="SUPFAM" id="SSF51569">
    <property type="entry name" value="Aldolase"/>
    <property type="match status" value="1"/>
</dbReference>
<dbReference type="PROSITE" id="PS00665">
    <property type="entry name" value="DHDPS_1"/>
    <property type="match status" value="1"/>
</dbReference>
<dbReference type="PROSITE" id="PS00666">
    <property type="entry name" value="DHDPS_2"/>
    <property type="match status" value="1"/>
</dbReference>
<protein>
    <recommendedName>
        <fullName evidence="1">N-acetylneuraminate lyase</fullName>
        <shortName evidence="1">NAL</shortName>
        <shortName evidence="1">Neu5Ac lyase</shortName>
        <ecNumber evidence="1">4.1.3.3</ecNumber>
    </recommendedName>
    <alternativeName>
        <fullName evidence="1">N-acetylneuraminate pyruvate-lyase</fullName>
    </alternativeName>
    <alternativeName>
        <fullName evidence="1">N-acetylneuraminic acid aldolase</fullName>
    </alternativeName>
    <alternativeName>
        <fullName evidence="1">Sialate lyase</fullName>
    </alternativeName>
    <alternativeName>
        <fullName evidence="1">Sialic acid aldolase</fullName>
    </alternativeName>
    <alternativeName>
        <fullName evidence="1">Sialic acid lyase</fullName>
    </alternativeName>
</protein>
<accession>A9N833</accession>
<reference key="1">
    <citation type="submission" date="2007-11" db="EMBL/GenBank/DDBJ databases">
        <authorList>
            <consortium name="The Salmonella enterica serovar Paratyphi B Genome Sequencing Project"/>
            <person name="McClelland M."/>
            <person name="Sanderson E.K."/>
            <person name="Porwollik S."/>
            <person name="Spieth J."/>
            <person name="Clifton W.S."/>
            <person name="Fulton R."/>
            <person name="Cordes M."/>
            <person name="Wollam A."/>
            <person name="Shah N."/>
            <person name="Pepin K."/>
            <person name="Bhonagiri V."/>
            <person name="Nash W."/>
            <person name="Johnson M."/>
            <person name="Thiruvilangam P."/>
            <person name="Wilson R."/>
        </authorList>
    </citation>
    <scope>NUCLEOTIDE SEQUENCE [LARGE SCALE GENOMIC DNA]</scope>
    <source>
        <strain>ATCC BAA-1250 / SPB7</strain>
    </source>
</reference>
<gene>
    <name evidence="1" type="primary">nanA</name>
    <name type="ordered locus">SPAB_04163</name>
</gene>
<organism>
    <name type="scientific">Salmonella paratyphi B (strain ATCC BAA-1250 / SPB7)</name>
    <dbReference type="NCBI Taxonomy" id="1016998"/>
    <lineage>
        <taxon>Bacteria</taxon>
        <taxon>Pseudomonadati</taxon>
        <taxon>Pseudomonadota</taxon>
        <taxon>Gammaproteobacteria</taxon>
        <taxon>Enterobacterales</taxon>
        <taxon>Enterobacteriaceae</taxon>
        <taxon>Salmonella</taxon>
    </lineage>
</organism>
<sequence>MAKALQGVMAALLTPFDHQQQLDSESLRRLVRFNIGQGIDGLYVGGSTGEAFVQSLAEREQVLEIVAEEAKGKITLIAHVGTVSTAESQQLASAAKRYGFDAVSAVTPFYYPFSFEEHCDHYRAIIDSADGLPMVVYNIPALSGVKLTLDQINTLVTLPGVSALKQTSGDLFQMEQIRRAHPDLVLYNGYDEIFASGLLAGADGGIGSTYNIMGWRYQGIVQALREGDVAKAQRLQTECNKVIDLLIKTGVFRGLKTVLHYMDVLSVPLCRKPFAPVDEKYLPALKALAQQLMEEKA</sequence>
<evidence type="ECO:0000255" key="1">
    <source>
        <dbReference type="HAMAP-Rule" id="MF_01237"/>
    </source>
</evidence>
<keyword id="KW-0119">Carbohydrate metabolism</keyword>
<keyword id="KW-0963">Cytoplasm</keyword>
<keyword id="KW-0456">Lyase</keyword>
<keyword id="KW-0704">Schiff base</keyword>
<comment type="function">
    <text evidence="1">Catalyzes the reversible aldol cleavage of N-acetylneuraminic acid (sialic acid; Neu5Ac) to form pyruvate and N-acetylmannosamine (ManNAc) via a Schiff base intermediate.</text>
</comment>
<comment type="catalytic activity">
    <reaction evidence="1">
        <text>aceneuramate = aldehydo-N-acetyl-D-mannosamine + pyruvate</text>
        <dbReference type="Rhea" id="RHEA:23296"/>
        <dbReference type="ChEBI" id="CHEBI:15361"/>
        <dbReference type="ChEBI" id="CHEBI:17122"/>
        <dbReference type="ChEBI" id="CHEBI:173083"/>
        <dbReference type="EC" id="4.1.3.3"/>
    </reaction>
</comment>
<comment type="pathway">
    <text evidence="1">Amino-sugar metabolism; N-acetylneuraminate degradation; D-fructose 6-phosphate from N-acetylneuraminate: step 1/5.</text>
</comment>
<comment type="subunit">
    <text evidence="1">Homotetramer.</text>
</comment>
<comment type="subcellular location">
    <subcellularLocation>
        <location evidence="1">Cytoplasm</location>
    </subcellularLocation>
</comment>
<comment type="similarity">
    <text evidence="1">Belongs to the DapA family. NanA subfamily.</text>
</comment>
<name>NANA_SALPB</name>